<protein>
    <recommendedName>
        <fullName evidence="1">Maturase K</fullName>
    </recommendedName>
    <alternativeName>
        <fullName evidence="1">Intron maturase</fullName>
    </alternativeName>
</protein>
<accession>Q9GHG9</accession>
<accession>Q3V553</accession>
<dbReference type="EMBL" id="AB040154">
    <property type="protein sequence ID" value="BAB16762.1"/>
    <property type="molecule type" value="Genomic_DNA"/>
</dbReference>
<dbReference type="EMBL" id="AJ879453">
    <property type="protein sequence ID" value="CAI53775.1"/>
    <property type="molecule type" value="Genomic_DNA"/>
</dbReference>
<dbReference type="RefSeq" id="YP_319746.1">
    <property type="nucleotide sequence ID" value="NC_007407.1"/>
</dbReference>
<dbReference type="GeneID" id="3677515"/>
<dbReference type="GO" id="GO:0009507">
    <property type="term" value="C:chloroplast"/>
    <property type="evidence" value="ECO:0007669"/>
    <property type="project" value="UniProtKB-SubCell"/>
</dbReference>
<dbReference type="GO" id="GO:0003723">
    <property type="term" value="F:RNA binding"/>
    <property type="evidence" value="ECO:0007669"/>
    <property type="project" value="UniProtKB-KW"/>
</dbReference>
<dbReference type="GO" id="GO:0006397">
    <property type="term" value="P:mRNA processing"/>
    <property type="evidence" value="ECO:0007669"/>
    <property type="project" value="UniProtKB-KW"/>
</dbReference>
<dbReference type="GO" id="GO:0008380">
    <property type="term" value="P:RNA splicing"/>
    <property type="evidence" value="ECO:0007669"/>
    <property type="project" value="UniProtKB-UniRule"/>
</dbReference>
<dbReference type="GO" id="GO:0008033">
    <property type="term" value="P:tRNA processing"/>
    <property type="evidence" value="ECO:0007669"/>
    <property type="project" value="UniProtKB-KW"/>
</dbReference>
<dbReference type="HAMAP" id="MF_01390">
    <property type="entry name" value="MatK"/>
    <property type="match status" value="1"/>
</dbReference>
<dbReference type="InterPro" id="IPR024937">
    <property type="entry name" value="Domain_X"/>
</dbReference>
<dbReference type="InterPro" id="IPR002866">
    <property type="entry name" value="Maturase_MatK"/>
</dbReference>
<dbReference type="InterPro" id="IPR024942">
    <property type="entry name" value="Maturase_MatK_N"/>
</dbReference>
<dbReference type="PANTHER" id="PTHR34811">
    <property type="entry name" value="MATURASE K"/>
    <property type="match status" value="1"/>
</dbReference>
<dbReference type="PANTHER" id="PTHR34811:SF1">
    <property type="entry name" value="MATURASE K"/>
    <property type="match status" value="1"/>
</dbReference>
<dbReference type="Pfam" id="PF01348">
    <property type="entry name" value="Intron_maturas2"/>
    <property type="match status" value="1"/>
</dbReference>
<dbReference type="Pfam" id="PF01824">
    <property type="entry name" value="MatK_N"/>
    <property type="match status" value="1"/>
</dbReference>
<feature type="chain" id="PRO_0000143205" description="Maturase K">
    <location>
        <begin position="1"/>
        <end position="511"/>
    </location>
</feature>
<feature type="sequence conflict" description="In Ref. 1; BAB16762." evidence="2" ref="1">
    <original>Q</original>
    <variation>K</variation>
    <location>
        <position position="70"/>
    </location>
</feature>
<feature type="sequence conflict" description="In Ref. 1; BAB16762." evidence="2" ref="1">
    <original>A</original>
    <variation>T</variation>
    <location>
        <position position="135"/>
    </location>
</feature>
<feature type="sequence conflict" description="In Ref. 1; BAB16762." evidence="2" ref="1">
    <original>G</original>
    <variation>V</variation>
    <location>
        <position position="254"/>
    </location>
</feature>
<feature type="sequence conflict" description="In Ref. 1; BAB16762." evidence="2" ref="1">
    <original>K</original>
    <variation>N</variation>
    <location>
        <position position="265"/>
    </location>
</feature>
<feature type="sequence conflict" description="In Ref. 1; BAB16762." evidence="2" ref="1">
    <original>H</original>
    <variation>D</variation>
    <location>
        <position position="296"/>
    </location>
</feature>
<feature type="sequence conflict" description="In Ref. 1; BAB16762." evidence="2" ref="1">
    <original>D</original>
    <variation>H</variation>
    <location>
        <position position="315"/>
    </location>
</feature>
<feature type="sequence conflict" description="In Ref. 1; BAB16762." evidence="2" ref="1">
    <original>Q</original>
    <variation>R</variation>
    <location>
        <position position="327"/>
    </location>
</feature>
<feature type="sequence conflict" description="In Ref. 1; BAB16762." evidence="2" ref="1">
    <original>H</original>
    <variation>R</variation>
    <location>
        <position position="331"/>
    </location>
</feature>
<feature type="sequence conflict" description="In Ref. 1; BAB16762." evidence="2" ref="1">
    <original>A</original>
    <variation>V</variation>
    <location>
        <position position="381"/>
    </location>
</feature>
<feature type="sequence conflict" description="In Ref. 1; BAB16762." evidence="2" ref="1">
    <original>E</original>
    <variation>D</variation>
    <location>
        <position position="466"/>
    </location>
</feature>
<comment type="function">
    <text evidence="1">Usually encoded in the trnK tRNA gene intron. Probably assists in splicing its own and other chloroplast group II introns.</text>
</comment>
<comment type="subcellular location">
    <subcellularLocation>
        <location>Plastid</location>
        <location>Chloroplast</location>
    </subcellularLocation>
</comment>
<comment type="similarity">
    <text evidence="1">Belongs to the intron maturase 2 family. MatK subfamily.</text>
</comment>
<evidence type="ECO:0000255" key="1">
    <source>
        <dbReference type="HAMAP-Rule" id="MF_01390"/>
    </source>
</evidence>
<evidence type="ECO:0000305" key="2"/>
<gene>
    <name evidence="1" type="primary">matK</name>
</gene>
<geneLocation type="chloroplast"/>
<name>MATK_ACOCL</name>
<reference key="1">
    <citation type="journal article" date="2000" name="Plant Biol.">
        <title>A phylogenetic analysis of the plastid matK gene with emphasis on Melanthiaceae sensu lato.</title>
        <authorList>
            <person name="Fuse S."/>
            <person name="Tamura M.N."/>
        </authorList>
    </citation>
    <scope>NUCLEOTIDE SEQUENCE [GENOMIC DNA]</scope>
</reference>
<reference key="2">
    <citation type="journal article" date="2005" name="Mol. Biol. Evol.">
        <title>Analysis of Acorus calamus chloroplast genome and its phylogenetic implications.</title>
        <authorList>
            <person name="Goremykin V.V."/>
            <person name="Holland B."/>
            <person name="Hirsch-Ernst K.I."/>
            <person name="Hellwig F.H."/>
        </authorList>
    </citation>
    <scope>NUCLEOTIDE SEQUENCE [LARGE SCALE GENOMIC DNA]</scope>
</reference>
<sequence length="511" mass="60627">MEEFKVYFEKDGSRQQYFLYPLLFQEYIYALAHNHVLNGLIFYESSENFVYDNKFSLIIVKRLITQMYQQNSLSNLVNDSNRNRLVRQNKNFYYQTILEGFSVIMEIPFSIIFLSSVEEKKAKIPKIQNLRSIHATFPFLEDKLSHLNHVSDILIPYPIHLEILVQVLQGWIQDVPSLHLLRFFLHEFHNWNSLITPKKSISFLFSKGNQRLFLFLYNSYVFECESALVFLRKQSFYLRSTSFGTFVERTHFYGKIEHIVVVRRKNFQKALSLFKDPFIHYIRYKGKSILASKGTHFLMKKWKYHLLNFWQCHFDFWSQPHRIHINQLSNHSFYFMGYLSSVRINFSTVRSQMLESSFLMDTPTKKFDTIVPIIPLIGSLAKAKFCNVSGHPVSKPVWADLSDADIIDRFGRICRNLSHYHSGSSKKQSLYRVKYILRLSCARTLARKHKSTVRAFFKRLGSEFLEEFFTDKEQVLSLIFPSLRSPSHRVHKGERIWYLDIIRINDLVNNS</sequence>
<organism>
    <name type="scientific">Acorus calamus</name>
    <name type="common">Sweet flag</name>
    <dbReference type="NCBI Taxonomy" id="4465"/>
    <lineage>
        <taxon>Eukaryota</taxon>
        <taxon>Viridiplantae</taxon>
        <taxon>Streptophyta</taxon>
        <taxon>Embryophyta</taxon>
        <taxon>Tracheophyta</taxon>
        <taxon>Spermatophyta</taxon>
        <taxon>Magnoliopsida</taxon>
        <taxon>Liliopsida</taxon>
        <taxon>Acoraceae</taxon>
        <taxon>Acorus</taxon>
    </lineage>
</organism>
<keyword id="KW-0150">Chloroplast</keyword>
<keyword id="KW-0507">mRNA processing</keyword>
<keyword id="KW-0934">Plastid</keyword>
<keyword id="KW-0694">RNA-binding</keyword>
<keyword id="KW-0819">tRNA processing</keyword>
<proteinExistence type="inferred from homology"/>